<organism>
    <name type="scientific">Escherichia coli O6:H1 (strain CFT073 / ATCC 700928 / UPEC)</name>
    <dbReference type="NCBI Taxonomy" id="199310"/>
    <lineage>
        <taxon>Bacteria</taxon>
        <taxon>Pseudomonadati</taxon>
        <taxon>Pseudomonadota</taxon>
        <taxon>Gammaproteobacteria</taxon>
        <taxon>Enterobacterales</taxon>
        <taxon>Enterobacteriaceae</taxon>
        <taxon>Escherichia</taxon>
    </lineage>
</organism>
<proteinExistence type="inferred from homology"/>
<protein>
    <recommendedName>
        <fullName evidence="1">NH(3)-dependent NAD(+) synthetase</fullName>
        <ecNumber evidence="1">6.3.1.5</ecNumber>
    </recommendedName>
</protein>
<name>NADE_ECOL6</name>
<gene>
    <name evidence="1" type="primary">nadE</name>
    <name type="ordered locus">c2139</name>
</gene>
<reference key="1">
    <citation type="journal article" date="2002" name="Proc. Natl. Acad. Sci. U.S.A.">
        <title>Extensive mosaic structure revealed by the complete genome sequence of uropathogenic Escherichia coli.</title>
        <authorList>
            <person name="Welch R.A."/>
            <person name="Burland V."/>
            <person name="Plunkett G. III"/>
            <person name="Redford P."/>
            <person name="Roesch P."/>
            <person name="Rasko D."/>
            <person name="Buckles E.L."/>
            <person name="Liou S.-R."/>
            <person name="Boutin A."/>
            <person name="Hackett J."/>
            <person name="Stroud D."/>
            <person name="Mayhew G.F."/>
            <person name="Rose D.J."/>
            <person name="Zhou S."/>
            <person name="Schwartz D.C."/>
            <person name="Perna N.T."/>
            <person name="Mobley H.L.T."/>
            <person name="Donnenberg M.S."/>
            <person name="Blattner F.R."/>
        </authorList>
    </citation>
    <scope>NUCLEOTIDE SEQUENCE [LARGE SCALE GENOMIC DNA]</scope>
    <source>
        <strain>CFT073 / ATCC 700928 / UPEC</strain>
    </source>
</reference>
<evidence type="ECO:0000255" key="1">
    <source>
        <dbReference type="HAMAP-Rule" id="MF_00193"/>
    </source>
</evidence>
<comment type="function">
    <text evidence="1">Catalyzes the ATP-dependent amidation of deamido-NAD to form NAD. Uses ammonia as a nitrogen source.</text>
</comment>
<comment type="catalytic activity">
    <reaction evidence="1">
        <text>deamido-NAD(+) + NH4(+) + ATP = AMP + diphosphate + NAD(+) + H(+)</text>
        <dbReference type="Rhea" id="RHEA:21188"/>
        <dbReference type="ChEBI" id="CHEBI:15378"/>
        <dbReference type="ChEBI" id="CHEBI:28938"/>
        <dbReference type="ChEBI" id="CHEBI:30616"/>
        <dbReference type="ChEBI" id="CHEBI:33019"/>
        <dbReference type="ChEBI" id="CHEBI:57540"/>
        <dbReference type="ChEBI" id="CHEBI:58437"/>
        <dbReference type="ChEBI" id="CHEBI:456215"/>
        <dbReference type="EC" id="6.3.1.5"/>
    </reaction>
</comment>
<comment type="pathway">
    <text evidence="1">Cofactor biosynthesis; NAD(+) biosynthesis; NAD(+) from deamido-NAD(+) (ammonia route): step 1/1.</text>
</comment>
<comment type="subunit">
    <text evidence="1">Homodimer.</text>
</comment>
<comment type="similarity">
    <text evidence="1">Belongs to the NAD synthetase family.</text>
</comment>
<dbReference type="EC" id="6.3.1.5" evidence="1"/>
<dbReference type="EMBL" id="AE014075">
    <property type="protein sequence ID" value="AAN80598.1"/>
    <property type="molecule type" value="Genomic_DNA"/>
</dbReference>
<dbReference type="RefSeq" id="WP_000175018.1">
    <property type="nucleotide sequence ID" value="NZ_CP051263.1"/>
</dbReference>
<dbReference type="SMR" id="Q8FH06"/>
<dbReference type="STRING" id="199310.c2139"/>
<dbReference type="KEGG" id="ecc:c2139"/>
<dbReference type="eggNOG" id="COG0171">
    <property type="taxonomic scope" value="Bacteria"/>
</dbReference>
<dbReference type="HOGENOM" id="CLU_059327_3_0_6"/>
<dbReference type="BioCyc" id="ECOL199310:C2139-MONOMER"/>
<dbReference type="UniPathway" id="UPA00253">
    <property type="reaction ID" value="UER00333"/>
</dbReference>
<dbReference type="Proteomes" id="UP000001410">
    <property type="component" value="Chromosome"/>
</dbReference>
<dbReference type="GO" id="GO:0005737">
    <property type="term" value="C:cytoplasm"/>
    <property type="evidence" value="ECO:0007669"/>
    <property type="project" value="InterPro"/>
</dbReference>
<dbReference type="GO" id="GO:0005524">
    <property type="term" value="F:ATP binding"/>
    <property type="evidence" value="ECO:0007669"/>
    <property type="project" value="UniProtKB-UniRule"/>
</dbReference>
<dbReference type="GO" id="GO:0004359">
    <property type="term" value="F:glutaminase activity"/>
    <property type="evidence" value="ECO:0007669"/>
    <property type="project" value="InterPro"/>
</dbReference>
<dbReference type="GO" id="GO:0046872">
    <property type="term" value="F:metal ion binding"/>
    <property type="evidence" value="ECO:0007669"/>
    <property type="project" value="UniProtKB-KW"/>
</dbReference>
<dbReference type="GO" id="GO:0003952">
    <property type="term" value="F:NAD+ synthase (glutamine-hydrolyzing) activity"/>
    <property type="evidence" value="ECO:0007669"/>
    <property type="project" value="InterPro"/>
</dbReference>
<dbReference type="GO" id="GO:0008795">
    <property type="term" value="F:NAD+ synthase activity"/>
    <property type="evidence" value="ECO:0007669"/>
    <property type="project" value="UniProtKB-UniRule"/>
</dbReference>
<dbReference type="GO" id="GO:0009435">
    <property type="term" value="P:NAD biosynthetic process"/>
    <property type="evidence" value="ECO:0007669"/>
    <property type="project" value="UniProtKB-UniRule"/>
</dbReference>
<dbReference type="CDD" id="cd00553">
    <property type="entry name" value="NAD_synthase"/>
    <property type="match status" value="1"/>
</dbReference>
<dbReference type="FunFam" id="3.40.50.620:FF:000015">
    <property type="entry name" value="NH(3)-dependent NAD(+) synthetase"/>
    <property type="match status" value="1"/>
</dbReference>
<dbReference type="Gene3D" id="3.40.50.620">
    <property type="entry name" value="HUPs"/>
    <property type="match status" value="1"/>
</dbReference>
<dbReference type="HAMAP" id="MF_00193">
    <property type="entry name" value="NadE_ammonia_dep"/>
    <property type="match status" value="1"/>
</dbReference>
<dbReference type="InterPro" id="IPR022310">
    <property type="entry name" value="NAD/GMP_synthase"/>
</dbReference>
<dbReference type="InterPro" id="IPR003694">
    <property type="entry name" value="NAD_synthase"/>
</dbReference>
<dbReference type="InterPro" id="IPR022926">
    <property type="entry name" value="NH(3)-dep_NAD(+)_synth"/>
</dbReference>
<dbReference type="InterPro" id="IPR014729">
    <property type="entry name" value="Rossmann-like_a/b/a_fold"/>
</dbReference>
<dbReference type="NCBIfam" id="TIGR00552">
    <property type="entry name" value="nadE"/>
    <property type="match status" value="1"/>
</dbReference>
<dbReference type="NCBIfam" id="NF001979">
    <property type="entry name" value="PRK00768.1"/>
    <property type="match status" value="1"/>
</dbReference>
<dbReference type="PANTHER" id="PTHR23090">
    <property type="entry name" value="NH 3 /GLUTAMINE-DEPENDENT NAD + SYNTHETASE"/>
    <property type="match status" value="1"/>
</dbReference>
<dbReference type="PANTHER" id="PTHR23090:SF7">
    <property type="entry name" value="NH(3)-DEPENDENT NAD(+) SYNTHETASE"/>
    <property type="match status" value="1"/>
</dbReference>
<dbReference type="Pfam" id="PF02540">
    <property type="entry name" value="NAD_synthase"/>
    <property type="match status" value="1"/>
</dbReference>
<dbReference type="SUPFAM" id="SSF52402">
    <property type="entry name" value="Adenine nucleotide alpha hydrolases-like"/>
    <property type="match status" value="1"/>
</dbReference>
<sequence length="275" mass="30653">MTLQQQIIKALGAKPQINAEEEIRRSIDFLKSYLQTYPFIKSLVLGISGGQDSTLAGKLCQMAINELRQETGNESLQFIAVRLPYGVQADEQDCQDAIAFIQPDRVLTVNIKGAVLASEQALREAGIELSDFVRGNEKARERMKAQYSIAGMTSGVVVGTDHAAEAITGFFTKYGDGGTDINPLYRLNKRQGKQLLAALGCPEHLYKKAPTADLEDDRPSLPDEVALGVTYDNIDDYLEGKNVPEQVARTIENWYLKTEHKRRPPITVFDDFWKK</sequence>
<keyword id="KW-0067">ATP-binding</keyword>
<keyword id="KW-0436">Ligase</keyword>
<keyword id="KW-0460">Magnesium</keyword>
<keyword id="KW-0479">Metal-binding</keyword>
<keyword id="KW-0520">NAD</keyword>
<keyword id="KW-0547">Nucleotide-binding</keyword>
<keyword id="KW-1185">Reference proteome</keyword>
<accession>Q8FH06</accession>
<feature type="chain" id="PRO_0000152168" description="NH(3)-dependent NAD(+) synthetase">
    <location>
        <begin position="1"/>
        <end position="275"/>
    </location>
</feature>
<feature type="binding site" evidence="1">
    <location>
        <begin position="46"/>
        <end position="53"/>
    </location>
    <ligand>
        <name>ATP</name>
        <dbReference type="ChEBI" id="CHEBI:30616"/>
    </ligand>
</feature>
<feature type="binding site" evidence="1">
    <location>
        <position position="52"/>
    </location>
    <ligand>
        <name>Mg(2+)</name>
        <dbReference type="ChEBI" id="CHEBI:18420"/>
    </ligand>
</feature>
<feature type="binding site" evidence="1">
    <location>
        <position position="140"/>
    </location>
    <ligand>
        <name>deamido-NAD(+)</name>
        <dbReference type="ChEBI" id="CHEBI:58437"/>
    </ligand>
</feature>
<feature type="binding site" evidence="1">
    <location>
        <position position="160"/>
    </location>
    <ligand>
        <name>ATP</name>
        <dbReference type="ChEBI" id="CHEBI:30616"/>
    </ligand>
</feature>
<feature type="binding site" evidence="1">
    <location>
        <position position="165"/>
    </location>
    <ligand>
        <name>Mg(2+)</name>
        <dbReference type="ChEBI" id="CHEBI:18420"/>
    </ligand>
</feature>
<feature type="binding site" evidence="1">
    <location>
        <position position="173"/>
    </location>
    <ligand>
        <name>deamido-NAD(+)</name>
        <dbReference type="ChEBI" id="CHEBI:58437"/>
    </ligand>
</feature>
<feature type="binding site" evidence="1">
    <location>
        <position position="180"/>
    </location>
    <ligand>
        <name>deamido-NAD(+)</name>
        <dbReference type="ChEBI" id="CHEBI:58437"/>
    </ligand>
</feature>
<feature type="binding site" evidence="1">
    <location>
        <position position="189"/>
    </location>
    <ligand>
        <name>ATP</name>
        <dbReference type="ChEBI" id="CHEBI:30616"/>
    </ligand>
</feature>
<feature type="binding site" evidence="1">
    <location>
        <position position="211"/>
    </location>
    <ligand>
        <name>ATP</name>
        <dbReference type="ChEBI" id="CHEBI:30616"/>
    </ligand>
</feature>
<feature type="binding site" evidence="1">
    <location>
        <begin position="260"/>
        <end position="261"/>
    </location>
    <ligand>
        <name>deamido-NAD(+)</name>
        <dbReference type="ChEBI" id="CHEBI:58437"/>
    </ligand>
</feature>